<name>HTRA_LACLM</name>
<organism>
    <name type="scientific">Lactococcus lactis subsp. cremoris (strain MG1363)</name>
    <dbReference type="NCBI Taxonomy" id="416870"/>
    <lineage>
        <taxon>Bacteria</taxon>
        <taxon>Bacillati</taxon>
        <taxon>Bacillota</taxon>
        <taxon>Bacilli</taxon>
        <taxon>Lactobacillales</taxon>
        <taxon>Streptococcaceae</taxon>
        <taxon>Lactococcus</taxon>
        <taxon>Lactococcus cremoris subsp. cremoris</taxon>
    </lineage>
</organism>
<comment type="function">
    <text evidence="1">Degrades abnormal exported proteins and responsible for the propeptide processing of a natural pro-protein and for the maturation of a native protein. It also plays a prominent role in stress (heat shock, ethanol, puromycin and NaCl) resistance during active exponential growth (By similarity).</text>
</comment>
<comment type="catalytic activity">
    <reaction>
        <text>Acts on substrates that are at least partially unfolded. The cleavage site P1 residue is normally between a pair of hydrophobic residues, such as Val-|-Val.</text>
        <dbReference type="EC" id="3.4.21.107"/>
    </reaction>
</comment>
<comment type="subcellular location">
    <subcellularLocation>
        <location evidence="5">Cell membrane</location>
        <topology evidence="5">Single-pass membrane protein</topology>
    </subcellularLocation>
</comment>
<comment type="disruption phenotype">
    <text evidence="4">Inactivation leads to reduce the efficiency of secretion of the recombinant protein produced, although the protein produced is completely stabilized.</text>
</comment>
<comment type="similarity">
    <text evidence="5">Belongs to the peptidase S1C family.</text>
</comment>
<dbReference type="EC" id="3.4.21.107"/>
<dbReference type="EMBL" id="AM406671">
    <property type="protein sequence ID" value="CAL98983.1"/>
    <property type="molecule type" value="Genomic_DNA"/>
</dbReference>
<dbReference type="RefSeq" id="WP_011836058.1">
    <property type="nucleotide sequence ID" value="NC_009004.1"/>
</dbReference>
<dbReference type="SMR" id="A2RNT9"/>
<dbReference type="STRING" id="416870.llmg_2419"/>
<dbReference type="MEROPS" id="S01.447"/>
<dbReference type="KEGG" id="llm:llmg_2419"/>
<dbReference type="eggNOG" id="COG0265">
    <property type="taxonomic scope" value="Bacteria"/>
</dbReference>
<dbReference type="HOGENOM" id="CLU_020120_0_2_9"/>
<dbReference type="OrthoDB" id="9758917at2"/>
<dbReference type="PhylomeDB" id="A2RNT9"/>
<dbReference type="Proteomes" id="UP000000364">
    <property type="component" value="Chromosome"/>
</dbReference>
<dbReference type="GO" id="GO:0005886">
    <property type="term" value="C:plasma membrane"/>
    <property type="evidence" value="ECO:0007669"/>
    <property type="project" value="UniProtKB-SubCell"/>
</dbReference>
<dbReference type="GO" id="GO:0004252">
    <property type="term" value="F:serine-type endopeptidase activity"/>
    <property type="evidence" value="ECO:0007669"/>
    <property type="project" value="InterPro"/>
</dbReference>
<dbReference type="GO" id="GO:0006508">
    <property type="term" value="P:proteolysis"/>
    <property type="evidence" value="ECO:0007669"/>
    <property type="project" value="UniProtKB-KW"/>
</dbReference>
<dbReference type="CDD" id="cd06781">
    <property type="entry name" value="cpPDZ_BsHtra-like"/>
    <property type="match status" value="1"/>
</dbReference>
<dbReference type="Gene3D" id="2.30.42.10">
    <property type="match status" value="1"/>
</dbReference>
<dbReference type="Gene3D" id="2.40.10.10">
    <property type="entry name" value="Trypsin-like serine proteases"/>
    <property type="match status" value="2"/>
</dbReference>
<dbReference type="InterPro" id="IPR051201">
    <property type="entry name" value="Chloro_Bact_Ser_Proteases"/>
</dbReference>
<dbReference type="InterPro" id="IPR001478">
    <property type="entry name" value="PDZ"/>
</dbReference>
<dbReference type="InterPro" id="IPR036034">
    <property type="entry name" value="PDZ_sf"/>
</dbReference>
<dbReference type="InterPro" id="IPR009003">
    <property type="entry name" value="Peptidase_S1_PA"/>
</dbReference>
<dbReference type="InterPro" id="IPR043504">
    <property type="entry name" value="Peptidase_S1_PA_chymotrypsin"/>
</dbReference>
<dbReference type="InterPro" id="IPR001940">
    <property type="entry name" value="Peptidase_S1C"/>
</dbReference>
<dbReference type="PANTHER" id="PTHR43343">
    <property type="entry name" value="PEPTIDASE S12"/>
    <property type="match status" value="1"/>
</dbReference>
<dbReference type="PANTHER" id="PTHR43343:SF3">
    <property type="entry name" value="PROTEASE DO-LIKE 8, CHLOROPLASTIC"/>
    <property type="match status" value="1"/>
</dbReference>
<dbReference type="Pfam" id="PF13180">
    <property type="entry name" value="PDZ_2"/>
    <property type="match status" value="1"/>
</dbReference>
<dbReference type="Pfam" id="PF13365">
    <property type="entry name" value="Trypsin_2"/>
    <property type="match status" value="1"/>
</dbReference>
<dbReference type="PRINTS" id="PR00834">
    <property type="entry name" value="PROTEASES2C"/>
</dbReference>
<dbReference type="SMART" id="SM00228">
    <property type="entry name" value="PDZ"/>
    <property type="match status" value="1"/>
</dbReference>
<dbReference type="SUPFAM" id="SSF50156">
    <property type="entry name" value="PDZ domain-like"/>
    <property type="match status" value="1"/>
</dbReference>
<dbReference type="SUPFAM" id="SSF50494">
    <property type="entry name" value="Trypsin-like serine proteases"/>
    <property type="match status" value="1"/>
</dbReference>
<dbReference type="PROSITE" id="PS50106">
    <property type="entry name" value="PDZ"/>
    <property type="match status" value="1"/>
</dbReference>
<proteinExistence type="inferred from homology"/>
<reference key="1">
    <citation type="journal article" date="2007" name="J. Bacteriol.">
        <title>The complete genome sequence of the lactic acid bacterial paradigm Lactococcus lactis subsp. cremoris MG1363.</title>
        <authorList>
            <person name="Wegmann U."/>
            <person name="O'Connell-Motherway M."/>
            <person name="Zomer A."/>
            <person name="Buist G."/>
            <person name="Shearman C."/>
            <person name="Canchaya C."/>
            <person name="Ventura M."/>
            <person name="Goesmann A."/>
            <person name="Gasson M.J."/>
            <person name="Kuipers O.P."/>
            <person name="van Sinderen D."/>
            <person name="Kok J."/>
        </authorList>
    </citation>
    <scope>NUCLEOTIDE SEQUENCE [LARGE SCALE GENOMIC DNA]</scope>
    <source>
        <strain>MG1363</strain>
    </source>
</reference>
<reference key="2">
    <citation type="journal article" date="2008" name="Appl. Environ. Microbiol.">
        <title>HtrA is essential for efficient secretion of recombinant proteins by Lactococcus lactis.</title>
        <authorList>
            <person name="Sriraman K."/>
            <person name="Jayaraman G."/>
        </authorList>
    </citation>
    <scope>DISRUPTION PHENOTYPE</scope>
</reference>
<protein>
    <recommendedName>
        <fullName>Serine protease Do-like HtrA</fullName>
        <ecNumber>3.4.21.107</ecNumber>
    </recommendedName>
</protein>
<accession>A2RNT9</accession>
<keyword id="KW-1003">Cell membrane</keyword>
<keyword id="KW-0378">Hydrolase</keyword>
<keyword id="KW-0472">Membrane</keyword>
<keyword id="KW-0645">Protease</keyword>
<keyword id="KW-0720">Serine protease</keyword>
<keyword id="KW-0812">Transmembrane</keyword>
<keyword id="KW-1133">Transmembrane helix</keyword>
<evidence type="ECO:0000250" key="1"/>
<evidence type="ECO:0000255" key="2"/>
<evidence type="ECO:0000255" key="3">
    <source>
        <dbReference type="PROSITE-ProRule" id="PRU00143"/>
    </source>
</evidence>
<evidence type="ECO:0000269" key="4">
    <source>
    </source>
</evidence>
<evidence type="ECO:0000305" key="5"/>
<gene>
    <name type="primary">htrA</name>
    <name type="ordered locus">llmg_2419</name>
</gene>
<sequence length="407" mass="41541">MAKANIGKLLLTGVVGGAIALGGSAIYQSTTNQLGNANRSNTTSTKVSNVSVNVNTDVTSAIKKVSNSVVSVMNYQKQNSQSDFSSIFGGNSGSSSANDGLQLSSEGSGVIYKKSGGDAYVVTNYHVIAGNSSLDVLLSGGQKVKATVVGYDEYTDLAVLKISSDHVKDVATFADSSKLTIGEPAIAVGSPLGSQFANTATEGILSATSRQVTLTQENGQTTSINAIQTDAAINPGNSGGALINIEGQVIGITQSKITTTEDGSTSVEGLGFAIPSNDVVNIINKLETDGKISRPALGIRMVDLSQLSTNDSSQLKLPSSVTGGVVVYSVQAGLPAATAGLKAGDVITKVGDTAVTSSTDLQSALYSHNINDTVKVTYYRDGKSATANVKLSKSTSDLETNSSSSSN</sequence>
<feature type="chain" id="PRO_0000414027" description="Serine protease Do-like HtrA">
    <location>
        <begin position="1"/>
        <end position="407"/>
    </location>
</feature>
<feature type="transmembrane region" description="Helical" evidence="2">
    <location>
        <begin position="6"/>
        <end position="26"/>
    </location>
</feature>
<feature type="domain" description="PDZ" evidence="3">
    <location>
        <begin position="301"/>
        <end position="382"/>
    </location>
</feature>
<feature type="active site" description="Charge relay system" evidence="1">
    <location>
        <position position="126"/>
    </location>
</feature>
<feature type="active site" description="Charge relay system" evidence="1">
    <location>
        <position position="156"/>
    </location>
</feature>
<feature type="active site" description="Charge relay system" evidence="1">
    <location>
        <position position="238"/>
    </location>
</feature>
<feature type="binding site" evidence="1">
    <location>
        <begin position="236"/>
        <end position="238"/>
    </location>
    <ligand>
        <name>substrate</name>
    </ligand>
</feature>
<feature type="binding site" evidence="1">
    <location>
        <begin position="297"/>
        <end position="301"/>
    </location>
    <ligand>
        <name>substrate</name>
    </ligand>
</feature>